<name>RDRP_TMVB</name>
<reference key="1">
    <citation type="submission" date="1998-10" db="EMBL/GenBank/DDBJ databases">
        <title>Complete nucleotide sequence and genome organization of tobacco mosaic virus isolated from Vicia faba.</title>
        <authorList>
            <person name="Xue C."/>
            <person name="Zhou X."/>
            <person name="Chen Q."/>
            <person name="Qi Y."/>
            <person name="Li D."/>
        </authorList>
    </citation>
    <scope>NUCLEOTIDE SEQUENCE [GENOMIC RNA]</scope>
</reference>
<protein>
    <recommendedName>
        <fullName>Replicase large subunit</fullName>
        <ecNumber>2.1.1.-</ecNumber>
        <ecNumber>2.7.7.-</ecNumber>
        <ecNumber>2.7.7.48</ecNumber>
        <ecNumber>3.6.4.13</ecNumber>
    </recommendedName>
    <alternativeName>
        <fullName>183 kDa protein</fullName>
    </alternativeName>
    <alternativeName>
        <fullName>RNA-directed RNA polymerase</fullName>
    </alternativeName>
    <component>
        <recommendedName>
            <fullName>Replicase small subunit</fullName>
            <ecNumber>2.1.1.-</ecNumber>
            <ecNumber>2.7.7.-</ecNumber>
            <ecNumber>3.6.4.13</ecNumber>
        </recommendedName>
        <alternativeName>
            <fullName>126 kDa protein</fullName>
        </alternativeName>
        <alternativeName>
            <fullName>Methyltransferase/RNA helicase</fullName>
            <shortName>MT/HEL</shortName>
        </alternativeName>
    </component>
</protein>
<dbReference type="EC" id="2.1.1.-"/>
<dbReference type="EC" id="2.7.7.-"/>
<dbReference type="EC" id="2.7.7.48"/>
<dbReference type="EC" id="3.6.4.13"/>
<dbReference type="EMBL" id="AJ011933">
    <property type="protein sequence ID" value="CAA09875.1"/>
    <property type="molecule type" value="Genomic_RNA"/>
</dbReference>
<dbReference type="EMBL" id="AJ011933">
    <property type="protein sequence ID" value="CAA09874.1"/>
    <property type="molecule type" value="Genomic_RNA"/>
</dbReference>
<dbReference type="Proteomes" id="UP000000279">
    <property type="component" value="Genome"/>
</dbReference>
<dbReference type="GO" id="GO:0005524">
    <property type="term" value="F:ATP binding"/>
    <property type="evidence" value="ECO:0007669"/>
    <property type="project" value="UniProtKB-KW"/>
</dbReference>
<dbReference type="GO" id="GO:0016887">
    <property type="term" value="F:ATP hydrolysis activity"/>
    <property type="evidence" value="ECO:0007669"/>
    <property type="project" value="RHEA"/>
</dbReference>
<dbReference type="GO" id="GO:0008174">
    <property type="term" value="F:mRNA methyltransferase activity"/>
    <property type="evidence" value="ECO:0007669"/>
    <property type="project" value="InterPro"/>
</dbReference>
<dbReference type="GO" id="GO:0003723">
    <property type="term" value="F:RNA binding"/>
    <property type="evidence" value="ECO:0007669"/>
    <property type="project" value="InterPro"/>
</dbReference>
<dbReference type="GO" id="GO:0003724">
    <property type="term" value="F:RNA helicase activity"/>
    <property type="evidence" value="ECO:0007669"/>
    <property type="project" value="UniProtKB-EC"/>
</dbReference>
<dbReference type="GO" id="GO:0003968">
    <property type="term" value="F:RNA-directed RNA polymerase activity"/>
    <property type="evidence" value="ECO:0007669"/>
    <property type="project" value="UniProtKB-KW"/>
</dbReference>
<dbReference type="GO" id="GO:0006351">
    <property type="term" value="P:DNA-templated transcription"/>
    <property type="evidence" value="ECO:0007669"/>
    <property type="project" value="InterPro"/>
</dbReference>
<dbReference type="GO" id="GO:0016556">
    <property type="term" value="P:mRNA modification"/>
    <property type="evidence" value="ECO:0007669"/>
    <property type="project" value="InterPro"/>
</dbReference>
<dbReference type="GO" id="GO:0006396">
    <property type="term" value="P:RNA processing"/>
    <property type="evidence" value="ECO:0007669"/>
    <property type="project" value="InterPro"/>
</dbReference>
<dbReference type="GO" id="GO:0052170">
    <property type="term" value="P:symbiont-mediated suppression of host innate immune response"/>
    <property type="evidence" value="ECO:0007669"/>
    <property type="project" value="UniProtKB-KW"/>
</dbReference>
<dbReference type="GO" id="GO:0039694">
    <property type="term" value="P:viral RNA genome replication"/>
    <property type="evidence" value="ECO:0007669"/>
    <property type="project" value="InterPro"/>
</dbReference>
<dbReference type="CDD" id="cd23251">
    <property type="entry name" value="Virgaviridae_RdRp"/>
    <property type="match status" value="1"/>
</dbReference>
<dbReference type="Gene3D" id="3.30.450.420">
    <property type="match status" value="1"/>
</dbReference>
<dbReference type="Gene3D" id="3.40.50.300">
    <property type="entry name" value="P-loop containing nucleotide triphosphate hydrolases"/>
    <property type="match status" value="2"/>
</dbReference>
<dbReference type="InterPro" id="IPR027351">
    <property type="entry name" value="(+)RNA_virus_helicase_core_dom"/>
</dbReference>
<dbReference type="InterPro" id="IPR002588">
    <property type="entry name" value="Alphavirus-like_MT_dom"/>
</dbReference>
<dbReference type="InterPro" id="IPR043502">
    <property type="entry name" value="DNA/RNA_pol_sf"/>
</dbReference>
<dbReference type="InterPro" id="IPR027417">
    <property type="entry name" value="P-loop_NTPase"/>
</dbReference>
<dbReference type="InterPro" id="IPR001788">
    <property type="entry name" value="RNA-dep_RNA_pol_alsuvir"/>
</dbReference>
<dbReference type="InterPro" id="IPR007094">
    <property type="entry name" value="RNA-dir_pol_PSvirus"/>
</dbReference>
<dbReference type="InterPro" id="IPR049329">
    <property type="entry name" value="ToMV_Hel_N"/>
</dbReference>
<dbReference type="InterPro" id="IPR047310">
    <property type="entry name" value="Virgaviridae_RdRp"/>
</dbReference>
<dbReference type="Pfam" id="PF00978">
    <property type="entry name" value="RdRP_2"/>
    <property type="match status" value="1"/>
</dbReference>
<dbReference type="Pfam" id="PF20896">
    <property type="entry name" value="ToMV_Hel_N"/>
    <property type="match status" value="1"/>
</dbReference>
<dbReference type="Pfam" id="PF01443">
    <property type="entry name" value="Viral_helicase1"/>
    <property type="match status" value="1"/>
</dbReference>
<dbReference type="Pfam" id="PF01660">
    <property type="entry name" value="Vmethyltransf"/>
    <property type="match status" value="1"/>
</dbReference>
<dbReference type="SUPFAM" id="SSF56672">
    <property type="entry name" value="DNA/RNA polymerases"/>
    <property type="match status" value="1"/>
</dbReference>
<dbReference type="SUPFAM" id="SSF52540">
    <property type="entry name" value="P-loop containing nucleoside triphosphate hydrolases"/>
    <property type="match status" value="1"/>
</dbReference>
<dbReference type="PROSITE" id="PS51743">
    <property type="entry name" value="ALPHAVIRUS_MT"/>
    <property type="match status" value="1"/>
</dbReference>
<dbReference type="PROSITE" id="PS51657">
    <property type="entry name" value="PSRV_HELICASE"/>
    <property type="match status" value="1"/>
</dbReference>
<dbReference type="PROSITE" id="PS50507">
    <property type="entry name" value="RDRP_SSRNA_POS"/>
    <property type="match status" value="1"/>
</dbReference>
<keyword id="KW-0067">ATP-binding</keyword>
<keyword id="KW-0347">Helicase</keyword>
<keyword id="KW-0945">Host-virus interaction</keyword>
<keyword id="KW-0378">Hydrolase</keyword>
<keyword id="KW-1090">Inhibition of host innate immune response by virus</keyword>
<keyword id="KW-0547">Nucleotide-binding</keyword>
<keyword id="KW-0548">Nucleotidyltransferase</keyword>
<keyword id="KW-1159">RNA suppression of termination</keyword>
<keyword id="KW-0696">RNA-directed RNA polymerase</keyword>
<keyword id="KW-0941">Suppressor of RNA silencing</keyword>
<keyword id="KW-0808">Transferase</keyword>
<keyword id="KW-0899">Viral immunoevasion</keyword>
<keyword id="KW-0693">Viral RNA replication</keyword>
<organismHost>
    <name type="scientific">Nicotiana tabacum</name>
    <name type="common">Common tobacco</name>
    <dbReference type="NCBI Taxonomy" id="4097"/>
</organismHost>
<comment type="function">
    <molecule>Replicase large subunit</molecule>
    <text evidence="1">Is an RNA-dependent RNA polymerase active in viral RNA replication.</text>
</comment>
<comment type="function">
    <molecule>Replicase small subunit</molecule>
    <text evidence="1 5">Is a methyltransferase active in RNA capping and an RNA helicase. Methyltransferase displays a cytoplasmic capping enzyme activity. This function is necessary since all viral RNAs are synthesized in the cytoplasm, and host capping enzymes are restricted to the nucleus. Helicase region probably exhibits NTPase and RNA unwinding activities (Potential). It also acts as a suppressor of RNA-mediated gene silencing, also known as post-transcriptional gene silencing (PTGS), a mechanism of plant viral defense that limits the accumulation of viral RNAs. May mediate silencing suppression through either inhibition of HEN1-mediated siRNA or siRNA demethylation (By similarity).</text>
</comment>
<comment type="catalytic activity">
    <reaction evidence="3">
        <text>RNA(n) + a ribonucleoside 5'-triphosphate = RNA(n+1) + diphosphate</text>
        <dbReference type="Rhea" id="RHEA:21248"/>
        <dbReference type="Rhea" id="RHEA-COMP:14527"/>
        <dbReference type="Rhea" id="RHEA-COMP:17342"/>
        <dbReference type="ChEBI" id="CHEBI:33019"/>
        <dbReference type="ChEBI" id="CHEBI:61557"/>
        <dbReference type="ChEBI" id="CHEBI:140395"/>
        <dbReference type="EC" id="2.7.7.48"/>
    </reaction>
</comment>
<comment type="catalytic activity">
    <reaction>
        <text>ATP + H2O = ADP + phosphate + H(+)</text>
        <dbReference type="Rhea" id="RHEA:13065"/>
        <dbReference type="ChEBI" id="CHEBI:15377"/>
        <dbReference type="ChEBI" id="CHEBI:15378"/>
        <dbReference type="ChEBI" id="CHEBI:30616"/>
        <dbReference type="ChEBI" id="CHEBI:43474"/>
        <dbReference type="ChEBI" id="CHEBI:456216"/>
        <dbReference type="EC" id="3.6.4.13"/>
    </reaction>
</comment>
<comment type="subunit">
    <text evidence="1">Heterodimer of a large and a small subunit.</text>
</comment>
<comment type="miscellaneous">
    <text>This protein is translated as a fusion protein by episodic readthrough of a termination codon. When readthrough of the amber terminator codon TAG occurs between the codons for Gln-1116 and Gln-1118, this results in the addition of the RdRp region to the replicase.</text>
</comment>
<comment type="similarity">
    <text evidence="5">Belongs to the ssRNA positive-strand viruses RNA-directed RNA polymerase family.</text>
</comment>
<evidence type="ECO:0000250" key="1"/>
<evidence type="ECO:0000255" key="2"/>
<evidence type="ECO:0000255" key="3">
    <source>
        <dbReference type="PROSITE-ProRule" id="PRU00539"/>
    </source>
</evidence>
<evidence type="ECO:0000255" key="4">
    <source>
        <dbReference type="PROSITE-ProRule" id="PRU01079"/>
    </source>
</evidence>
<evidence type="ECO:0000305" key="5"/>
<proteinExistence type="inferred from homology"/>
<sequence length="1616" mass="183299">MAYTQTATTSALLDTVRGNNSLVNDLAKRRLYDTAVEEFNARDRRPKVNFSKVISEEQTLIATRAYPEFQITFYNTQNAVHSLAGGLRSLELEYLMMQIPYGSLTYDIGGNFASHLFKGRAYVHCCMPNLDVRDIMRHEGQKDSIELYLSRLERGGKTVPNFQKEAFDRYAEIPEDAVCHNTFQTCEHQPMQQSGRVYAIALHSIYDIPADEFGAALLRKNVHTCYAAFHFSENLLLEDSYVNLDEINACFSRDGDKLTFSFASESTLNYCHSYSNILKYVCKTYFPASNREVYMKEFLVTRVNTWFCKFSRIDTFLLYKGVAHKSVDSEQFYTAMEDAWHYKKTLAMCNSERILLEDSSSVNYWFPKMRDMVIVPLFDISLETSKRTRKEVLVSKDFVFTVLNHIRTYQAKALTYANVLSFVESIRSRVIINGVTARSEWDVDKSLLQSLSMTFYLHTKLAVLKDDLLISKFSLGSKTVCQHVWDEISLAFGNAFPSVKERLLNRKLIRVAGDALEIRVPDLYVTFHDRLVTEYKASVDMPALDIRKKMEETEVMYNALSELSVLRESDKFDVDVFSQMCKSLEVDPMTAAKVIVADMSNESGLTLTFERPTEANVALALQDQEKASEGALVVTSREVEEPSMKGSMARGELQLAGLAGDHPESSYSKNEEIESLEQFHMATADSLIRKQMSSIVYTGPIKVQQMKNFIDSLVASLSAAVSNLVKILKDTAAIDLETRQKFGVLDVASRKWLIKPTAKSHAWGVVETHARKYHVALLEYDEQGVVTCDDWRRVAVSSESVVYSDMAKLRTLRRLLRNGEPHVSSAKVVLVDGVPGCGKTKEILSRVNFDEDLILVPGKQAAEMIRRRANSSGIIVATKDNVKTVDSFMMNFGKSTRCQFKRLFIDEGLMLHTGCVNFLVAMSLCEIAYVYGDTQQIPYINRVSGFPYPAHFAKLEVDEVETRRTTLRCPADVTHYLNRRYEGFVMSTSSVKKSVSQEMVGGAAVINPISKPSHGKILTFTQSDKEALLSRGYSDVHTVHEVQGETYSDVSLVRLTPTPVSIIAGDSPHVLVALSRHTCSLKYYTVVMDPLVSIIRDLEKLSSYLSDMYKVDAGTQXQLQIDSVFKGSNLFVAAPKTGDISDMQFYYDKCLPGNSTMMNNFDAVTMRLTDISLNVKDCILDMSKSVAAPKDQIKPLIPMVRTAAEMPRQTGLLENLVAMIKRNFNAPELSGIIDIENTASLVVDKFFDSYLLKEKRKPNKNVSLFSRESLNRWLEKQEQVTIGQLADFDFVDLPAVDQYRHMIKAQPKQKLDTSIQTEYPALQTIVYHSKKISAIFGPLFSELTRQLLDSVDSSRFLFFTRKTPAQIEDFFGDLDSHVPMDVLELDISKYDKSQNEFHCAVEYEIWRRLGFEDFLGEVWKQGHRKTTLKDYTAGIKTCIWYQRKSGDVTTFIGNTVIIAACLASMLPMEKIIKGAFCGDDSLLYFPKGCEFPDVQHSANLMWNFEAKLFKKQYGYFCGRYVIHHDRGCIVYYDPLKLISKLGAKHIKDWEHLEEFRRSLCDVAVSLNNCAYYTQLDDAVWEVHKTAPPGSFVYKSLVKYLSDKVLFRSLFIDGSSC</sequence>
<feature type="chain" id="PRO_0000041164" description="Replicase large subunit">
    <location>
        <begin position="1"/>
        <end position="1616"/>
    </location>
</feature>
<feature type="chain" id="PRO_0000041165" description="Replicase small subunit">
    <location>
        <begin position="1"/>
        <end position="1116"/>
    </location>
</feature>
<feature type="domain" description="Alphavirus-like MT" evidence="4">
    <location>
        <begin position="72"/>
        <end position="281"/>
    </location>
</feature>
<feature type="domain" description="(+)RNA virus helicase ATP-binding">
    <location>
        <begin position="801"/>
        <end position="963"/>
    </location>
</feature>
<feature type="domain" description="(+)RNA virus helicase C-terminal">
    <location>
        <begin position="964"/>
        <end position="1116"/>
    </location>
</feature>
<feature type="domain" description="RdRp catalytic" evidence="3">
    <location>
        <begin position="1380"/>
        <end position="1493"/>
    </location>
</feature>
<feature type="region of interest" description="Methyltransferase" evidence="2">
    <location>
        <begin position="50"/>
        <end position="458"/>
    </location>
</feature>
<feature type="region of interest" description="Helicase" evidence="2">
    <location>
        <begin position="830"/>
        <end position="1085"/>
    </location>
</feature>
<feature type="binding site" evidence="2">
    <location>
        <begin position="833"/>
        <end position="840"/>
    </location>
    <ligand>
        <name>ATP</name>
        <dbReference type="ChEBI" id="CHEBI:30616"/>
    </ligand>
</feature>
<accession>Q9YQ08</accession>
<accession>Q9WKD4</accession>
<organism>
    <name type="scientific">Tobacco mosaic virus (strain B935A)</name>
    <name type="common">TMV</name>
    <dbReference type="NCBI Taxonomy" id="138309"/>
    <lineage>
        <taxon>Viruses</taxon>
        <taxon>Riboviria</taxon>
        <taxon>Orthornavirae</taxon>
        <taxon>Kitrinoviricota</taxon>
        <taxon>Alsuviricetes</taxon>
        <taxon>Martellivirales</taxon>
        <taxon>Virgaviridae</taxon>
        <taxon>Tobamovirus</taxon>
        <taxon>Tobacco mosaic virus</taxon>
    </lineage>
</organism>